<accession>B1IVY7</accession>
<gene>
    <name evidence="1" type="primary">pyrD</name>
    <name type="ordered locus">EcolC_2651</name>
</gene>
<comment type="function">
    <text evidence="1">Catalyzes the conversion of dihydroorotate to orotate with quinone as electron acceptor.</text>
</comment>
<comment type="catalytic activity">
    <reaction evidence="1">
        <text>(S)-dihydroorotate + a quinone = orotate + a quinol</text>
        <dbReference type="Rhea" id="RHEA:30187"/>
        <dbReference type="ChEBI" id="CHEBI:24646"/>
        <dbReference type="ChEBI" id="CHEBI:30839"/>
        <dbReference type="ChEBI" id="CHEBI:30864"/>
        <dbReference type="ChEBI" id="CHEBI:132124"/>
        <dbReference type="EC" id="1.3.5.2"/>
    </reaction>
</comment>
<comment type="cofactor">
    <cofactor evidence="1">
        <name>FMN</name>
        <dbReference type="ChEBI" id="CHEBI:58210"/>
    </cofactor>
    <text evidence="1">Binds 1 FMN per subunit.</text>
</comment>
<comment type="pathway">
    <text evidence="1">Pyrimidine metabolism; UMP biosynthesis via de novo pathway; orotate from (S)-dihydroorotate (quinone route): step 1/1.</text>
</comment>
<comment type="subunit">
    <text evidence="1">Monomer.</text>
</comment>
<comment type="subcellular location">
    <subcellularLocation>
        <location evidence="1">Cell membrane</location>
        <topology evidence="1">Peripheral membrane protein</topology>
    </subcellularLocation>
</comment>
<comment type="similarity">
    <text evidence="1">Belongs to the dihydroorotate dehydrogenase family. Type 2 subfamily.</text>
</comment>
<dbReference type="EC" id="1.3.5.2" evidence="1"/>
<dbReference type="EMBL" id="CP000946">
    <property type="protein sequence ID" value="ACA78281.1"/>
    <property type="molecule type" value="Genomic_DNA"/>
</dbReference>
<dbReference type="RefSeq" id="WP_001295352.1">
    <property type="nucleotide sequence ID" value="NZ_MTFT01000009.1"/>
</dbReference>
<dbReference type="SMR" id="B1IVY7"/>
<dbReference type="GeneID" id="93776469"/>
<dbReference type="KEGG" id="ecl:EcolC_2651"/>
<dbReference type="HOGENOM" id="CLU_013640_2_0_6"/>
<dbReference type="UniPathway" id="UPA00070">
    <property type="reaction ID" value="UER00946"/>
</dbReference>
<dbReference type="GO" id="GO:0005737">
    <property type="term" value="C:cytoplasm"/>
    <property type="evidence" value="ECO:0007669"/>
    <property type="project" value="InterPro"/>
</dbReference>
<dbReference type="GO" id="GO:0005886">
    <property type="term" value="C:plasma membrane"/>
    <property type="evidence" value="ECO:0007669"/>
    <property type="project" value="UniProtKB-SubCell"/>
</dbReference>
<dbReference type="GO" id="GO:0106430">
    <property type="term" value="F:dihydroorotate dehydrogenase (quinone) activity"/>
    <property type="evidence" value="ECO:0007669"/>
    <property type="project" value="UniProtKB-EC"/>
</dbReference>
<dbReference type="GO" id="GO:0006207">
    <property type="term" value="P:'de novo' pyrimidine nucleobase biosynthetic process"/>
    <property type="evidence" value="ECO:0007669"/>
    <property type="project" value="InterPro"/>
</dbReference>
<dbReference type="GO" id="GO:0044205">
    <property type="term" value="P:'de novo' UMP biosynthetic process"/>
    <property type="evidence" value="ECO:0007669"/>
    <property type="project" value="UniProtKB-UniRule"/>
</dbReference>
<dbReference type="CDD" id="cd04738">
    <property type="entry name" value="DHOD_2_like"/>
    <property type="match status" value="1"/>
</dbReference>
<dbReference type="FunFam" id="3.20.20.70:FF:000028">
    <property type="entry name" value="Dihydroorotate dehydrogenase (quinone)"/>
    <property type="match status" value="1"/>
</dbReference>
<dbReference type="Gene3D" id="3.20.20.70">
    <property type="entry name" value="Aldolase class I"/>
    <property type="match status" value="1"/>
</dbReference>
<dbReference type="HAMAP" id="MF_00225">
    <property type="entry name" value="DHO_dh_type2"/>
    <property type="match status" value="1"/>
</dbReference>
<dbReference type="InterPro" id="IPR013785">
    <property type="entry name" value="Aldolase_TIM"/>
</dbReference>
<dbReference type="InterPro" id="IPR050074">
    <property type="entry name" value="DHO_dehydrogenase"/>
</dbReference>
<dbReference type="InterPro" id="IPR012135">
    <property type="entry name" value="Dihydroorotate_DH_1_2"/>
</dbReference>
<dbReference type="InterPro" id="IPR005719">
    <property type="entry name" value="Dihydroorotate_DH_2"/>
</dbReference>
<dbReference type="InterPro" id="IPR005720">
    <property type="entry name" value="Dihydroorotate_DH_cat"/>
</dbReference>
<dbReference type="InterPro" id="IPR001295">
    <property type="entry name" value="Dihydroorotate_DH_CS"/>
</dbReference>
<dbReference type="NCBIfam" id="NF003644">
    <property type="entry name" value="PRK05286.1-1"/>
    <property type="match status" value="1"/>
</dbReference>
<dbReference type="NCBIfam" id="NF003645">
    <property type="entry name" value="PRK05286.1-2"/>
    <property type="match status" value="1"/>
</dbReference>
<dbReference type="NCBIfam" id="NF003646">
    <property type="entry name" value="PRK05286.1-4"/>
    <property type="match status" value="1"/>
</dbReference>
<dbReference type="NCBIfam" id="NF003652">
    <property type="entry name" value="PRK05286.2-5"/>
    <property type="match status" value="1"/>
</dbReference>
<dbReference type="NCBIfam" id="TIGR01036">
    <property type="entry name" value="pyrD_sub2"/>
    <property type="match status" value="1"/>
</dbReference>
<dbReference type="PANTHER" id="PTHR48109:SF4">
    <property type="entry name" value="DIHYDROOROTATE DEHYDROGENASE (QUINONE), MITOCHONDRIAL"/>
    <property type="match status" value="1"/>
</dbReference>
<dbReference type="PANTHER" id="PTHR48109">
    <property type="entry name" value="DIHYDROOROTATE DEHYDROGENASE (QUINONE), MITOCHONDRIAL-RELATED"/>
    <property type="match status" value="1"/>
</dbReference>
<dbReference type="Pfam" id="PF01180">
    <property type="entry name" value="DHO_dh"/>
    <property type="match status" value="1"/>
</dbReference>
<dbReference type="PIRSF" id="PIRSF000164">
    <property type="entry name" value="DHO_oxidase"/>
    <property type="match status" value="1"/>
</dbReference>
<dbReference type="SUPFAM" id="SSF51395">
    <property type="entry name" value="FMN-linked oxidoreductases"/>
    <property type="match status" value="1"/>
</dbReference>
<dbReference type="PROSITE" id="PS00911">
    <property type="entry name" value="DHODEHASE_1"/>
    <property type="match status" value="1"/>
</dbReference>
<dbReference type="PROSITE" id="PS00912">
    <property type="entry name" value="DHODEHASE_2"/>
    <property type="match status" value="1"/>
</dbReference>
<protein>
    <recommendedName>
        <fullName evidence="1">Dihydroorotate dehydrogenase (quinone)</fullName>
        <ecNumber evidence="1">1.3.5.2</ecNumber>
    </recommendedName>
    <alternativeName>
        <fullName evidence="1">DHOdehase</fullName>
        <shortName evidence="1">DHOD</shortName>
        <shortName evidence="1">DHODase</shortName>
    </alternativeName>
    <alternativeName>
        <fullName evidence="1">Dihydroorotate oxidase</fullName>
    </alternativeName>
</protein>
<sequence length="336" mass="36775">MYYPFVRKALFQLDPERAHEFTFQQLRRITGTPFEALVRQKVPAKPVNCMGLTFKNPLGLAAGLDKDGECIDALGAMGFGSIEIGTVTPRPQPGNDKPRLFRLVDAEGLINRMGFNNLGVDNLVENVKKAHYDGVLGINIGKNKDTPVEQGKDDYLICMEKIYAYAGYIAINISSPNTPGLRTLQYGEALDDLLTAIKNKQNDLQAMHHKYVPIAVKIAPDLSEEELIQVADSLVRHNIDGVIATNTTLDRSLVQGMKNCDQTGGLSGRPLQLKSTEIIRRLSLELNGRLPIIGVGGIDSVIAAREKIAAGASLVQIYSGFIFKGPPLIKEIVTHI</sequence>
<proteinExistence type="inferred from homology"/>
<feature type="chain" id="PRO_1000078158" description="Dihydroorotate dehydrogenase (quinone)">
    <location>
        <begin position="1"/>
        <end position="336"/>
    </location>
</feature>
<feature type="active site" description="Nucleophile" evidence="1">
    <location>
        <position position="175"/>
    </location>
</feature>
<feature type="binding site" evidence="1">
    <location>
        <begin position="62"/>
        <end position="66"/>
    </location>
    <ligand>
        <name>FMN</name>
        <dbReference type="ChEBI" id="CHEBI:58210"/>
    </ligand>
</feature>
<feature type="binding site" evidence="1">
    <location>
        <position position="66"/>
    </location>
    <ligand>
        <name>substrate</name>
    </ligand>
</feature>
<feature type="binding site" evidence="1">
    <location>
        <position position="86"/>
    </location>
    <ligand>
        <name>FMN</name>
        <dbReference type="ChEBI" id="CHEBI:58210"/>
    </ligand>
</feature>
<feature type="binding site" evidence="1">
    <location>
        <begin position="111"/>
        <end position="115"/>
    </location>
    <ligand>
        <name>substrate</name>
    </ligand>
</feature>
<feature type="binding site" evidence="1">
    <location>
        <position position="139"/>
    </location>
    <ligand>
        <name>FMN</name>
        <dbReference type="ChEBI" id="CHEBI:58210"/>
    </ligand>
</feature>
<feature type="binding site" evidence="1">
    <location>
        <position position="172"/>
    </location>
    <ligand>
        <name>FMN</name>
        <dbReference type="ChEBI" id="CHEBI:58210"/>
    </ligand>
</feature>
<feature type="binding site" evidence="1">
    <location>
        <position position="172"/>
    </location>
    <ligand>
        <name>substrate</name>
    </ligand>
</feature>
<feature type="binding site" evidence="1">
    <location>
        <position position="177"/>
    </location>
    <ligand>
        <name>substrate</name>
    </ligand>
</feature>
<feature type="binding site" evidence="1">
    <location>
        <position position="217"/>
    </location>
    <ligand>
        <name>FMN</name>
        <dbReference type="ChEBI" id="CHEBI:58210"/>
    </ligand>
</feature>
<feature type="binding site" evidence="1">
    <location>
        <position position="245"/>
    </location>
    <ligand>
        <name>FMN</name>
        <dbReference type="ChEBI" id="CHEBI:58210"/>
    </ligand>
</feature>
<feature type="binding site" evidence="1">
    <location>
        <begin position="246"/>
        <end position="247"/>
    </location>
    <ligand>
        <name>substrate</name>
    </ligand>
</feature>
<feature type="binding site" evidence="1">
    <location>
        <position position="268"/>
    </location>
    <ligand>
        <name>FMN</name>
        <dbReference type="ChEBI" id="CHEBI:58210"/>
    </ligand>
</feature>
<feature type="binding site" evidence="1">
    <location>
        <position position="297"/>
    </location>
    <ligand>
        <name>FMN</name>
        <dbReference type="ChEBI" id="CHEBI:58210"/>
    </ligand>
</feature>
<feature type="binding site" evidence="1">
    <location>
        <begin position="318"/>
        <end position="319"/>
    </location>
    <ligand>
        <name>FMN</name>
        <dbReference type="ChEBI" id="CHEBI:58210"/>
    </ligand>
</feature>
<reference key="1">
    <citation type="submission" date="2008-02" db="EMBL/GenBank/DDBJ databases">
        <title>Complete sequence of Escherichia coli C str. ATCC 8739.</title>
        <authorList>
            <person name="Copeland A."/>
            <person name="Lucas S."/>
            <person name="Lapidus A."/>
            <person name="Glavina del Rio T."/>
            <person name="Dalin E."/>
            <person name="Tice H."/>
            <person name="Bruce D."/>
            <person name="Goodwin L."/>
            <person name="Pitluck S."/>
            <person name="Kiss H."/>
            <person name="Brettin T."/>
            <person name="Detter J.C."/>
            <person name="Han C."/>
            <person name="Kuske C.R."/>
            <person name="Schmutz J."/>
            <person name="Larimer F."/>
            <person name="Land M."/>
            <person name="Hauser L."/>
            <person name="Kyrpides N."/>
            <person name="Mikhailova N."/>
            <person name="Ingram L."/>
            <person name="Richardson P."/>
        </authorList>
    </citation>
    <scope>NUCLEOTIDE SEQUENCE [LARGE SCALE GENOMIC DNA]</scope>
    <source>
        <strain>ATCC 8739 / DSM 1576 / NBRC 3972 / NCIMB 8545 / WDCM 00012 / Crooks</strain>
    </source>
</reference>
<evidence type="ECO:0000255" key="1">
    <source>
        <dbReference type="HAMAP-Rule" id="MF_00225"/>
    </source>
</evidence>
<keyword id="KW-1003">Cell membrane</keyword>
<keyword id="KW-0285">Flavoprotein</keyword>
<keyword id="KW-0288">FMN</keyword>
<keyword id="KW-0472">Membrane</keyword>
<keyword id="KW-0560">Oxidoreductase</keyword>
<keyword id="KW-0665">Pyrimidine biosynthesis</keyword>
<name>PYRD_ECOLC</name>
<organism>
    <name type="scientific">Escherichia coli (strain ATCC 8739 / DSM 1576 / NBRC 3972 / NCIMB 8545 / WDCM 00012 / Crooks)</name>
    <dbReference type="NCBI Taxonomy" id="481805"/>
    <lineage>
        <taxon>Bacteria</taxon>
        <taxon>Pseudomonadati</taxon>
        <taxon>Pseudomonadota</taxon>
        <taxon>Gammaproteobacteria</taxon>
        <taxon>Enterobacterales</taxon>
        <taxon>Enterobacteriaceae</taxon>
        <taxon>Escherichia</taxon>
    </lineage>
</organism>